<name>RL14_METFK</name>
<evidence type="ECO:0000255" key="1">
    <source>
        <dbReference type="HAMAP-Rule" id="MF_01367"/>
    </source>
</evidence>
<evidence type="ECO:0000305" key="2"/>
<accession>Q1H4M7</accession>
<proteinExistence type="inferred from homology"/>
<gene>
    <name evidence="1" type="primary">rplN</name>
    <name type="ordered locus">Mfla_0289</name>
</gene>
<keyword id="KW-1185">Reference proteome</keyword>
<keyword id="KW-0687">Ribonucleoprotein</keyword>
<keyword id="KW-0689">Ribosomal protein</keyword>
<keyword id="KW-0694">RNA-binding</keyword>
<keyword id="KW-0699">rRNA-binding</keyword>
<dbReference type="EMBL" id="CP000284">
    <property type="protein sequence ID" value="ABE48560.1"/>
    <property type="molecule type" value="Genomic_DNA"/>
</dbReference>
<dbReference type="RefSeq" id="WP_011478657.1">
    <property type="nucleotide sequence ID" value="NC_007947.1"/>
</dbReference>
<dbReference type="SMR" id="Q1H4M7"/>
<dbReference type="STRING" id="265072.Mfla_0289"/>
<dbReference type="KEGG" id="mfa:Mfla_0289"/>
<dbReference type="eggNOG" id="COG0093">
    <property type="taxonomic scope" value="Bacteria"/>
</dbReference>
<dbReference type="HOGENOM" id="CLU_095071_2_1_4"/>
<dbReference type="OrthoDB" id="9806379at2"/>
<dbReference type="Proteomes" id="UP000002440">
    <property type="component" value="Chromosome"/>
</dbReference>
<dbReference type="GO" id="GO:0022625">
    <property type="term" value="C:cytosolic large ribosomal subunit"/>
    <property type="evidence" value="ECO:0007669"/>
    <property type="project" value="TreeGrafter"/>
</dbReference>
<dbReference type="GO" id="GO:0070180">
    <property type="term" value="F:large ribosomal subunit rRNA binding"/>
    <property type="evidence" value="ECO:0007669"/>
    <property type="project" value="TreeGrafter"/>
</dbReference>
<dbReference type="GO" id="GO:0003735">
    <property type="term" value="F:structural constituent of ribosome"/>
    <property type="evidence" value="ECO:0007669"/>
    <property type="project" value="InterPro"/>
</dbReference>
<dbReference type="GO" id="GO:0006412">
    <property type="term" value="P:translation"/>
    <property type="evidence" value="ECO:0007669"/>
    <property type="project" value="UniProtKB-UniRule"/>
</dbReference>
<dbReference type="CDD" id="cd00337">
    <property type="entry name" value="Ribosomal_uL14"/>
    <property type="match status" value="1"/>
</dbReference>
<dbReference type="FunFam" id="2.40.150.20:FF:000001">
    <property type="entry name" value="50S ribosomal protein L14"/>
    <property type="match status" value="1"/>
</dbReference>
<dbReference type="Gene3D" id="2.40.150.20">
    <property type="entry name" value="Ribosomal protein L14"/>
    <property type="match status" value="1"/>
</dbReference>
<dbReference type="HAMAP" id="MF_01367">
    <property type="entry name" value="Ribosomal_uL14"/>
    <property type="match status" value="1"/>
</dbReference>
<dbReference type="InterPro" id="IPR000218">
    <property type="entry name" value="Ribosomal_uL14"/>
</dbReference>
<dbReference type="InterPro" id="IPR005745">
    <property type="entry name" value="Ribosomal_uL14_bac-type"/>
</dbReference>
<dbReference type="InterPro" id="IPR019972">
    <property type="entry name" value="Ribosomal_uL14_CS"/>
</dbReference>
<dbReference type="InterPro" id="IPR036853">
    <property type="entry name" value="Ribosomal_uL14_sf"/>
</dbReference>
<dbReference type="NCBIfam" id="TIGR01067">
    <property type="entry name" value="rplN_bact"/>
    <property type="match status" value="1"/>
</dbReference>
<dbReference type="PANTHER" id="PTHR11761">
    <property type="entry name" value="50S/60S RIBOSOMAL PROTEIN L14/L23"/>
    <property type="match status" value="1"/>
</dbReference>
<dbReference type="PANTHER" id="PTHR11761:SF3">
    <property type="entry name" value="LARGE RIBOSOMAL SUBUNIT PROTEIN UL14M"/>
    <property type="match status" value="1"/>
</dbReference>
<dbReference type="Pfam" id="PF00238">
    <property type="entry name" value="Ribosomal_L14"/>
    <property type="match status" value="1"/>
</dbReference>
<dbReference type="SMART" id="SM01374">
    <property type="entry name" value="Ribosomal_L14"/>
    <property type="match status" value="1"/>
</dbReference>
<dbReference type="SUPFAM" id="SSF50193">
    <property type="entry name" value="Ribosomal protein L14"/>
    <property type="match status" value="1"/>
</dbReference>
<dbReference type="PROSITE" id="PS00049">
    <property type="entry name" value="RIBOSOMAL_L14"/>
    <property type="match status" value="1"/>
</dbReference>
<protein>
    <recommendedName>
        <fullName evidence="1">Large ribosomal subunit protein uL14</fullName>
    </recommendedName>
    <alternativeName>
        <fullName evidence="2">50S ribosomal protein L14</fullName>
    </alternativeName>
</protein>
<comment type="function">
    <text evidence="1">Binds to 23S rRNA. Forms part of two intersubunit bridges in the 70S ribosome.</text>
</comment>
<comment type="subunit">
    <text evidence="1">Part of the 50S ribosomal subunit. Forms a cluster with proteins L3 and L19. In the 70S ribosome, L14 and L19 interact and together make contacts with the 16S rRNA in bridges B5 and B8.</text>
</comment>
<comment type="similarity">
    <text evidence="1">Belongs to the universal ribosomal protein uL14 family.</text>
</comment>
<reference key="1">
    <citation type="submission" date="2006-03" db="EMBL/GenBank/DDBJ databases">
        <title>Complete sequence of Methylobacillus flagellatus KT.</title>
        <authorList>
            <consortium name="US DOE Joint Genome Institute"/>
            <person name="Copeland A."/>
            <person name="Lucas S."/>
            <person name="Lapidus A."/>
            <person name="Barry K."/>
            <person name="Detter J.C."/>
            <person name="Glavina del Rio T."/>
            <person name="Hammon N."/>
            <person name="Israni S."/>
            <person name="Dalin E."/>
            <person name="Tice H."/>
            <person name="Pitluck S."/>
            <person name="Brettin T."/>
            <person name="Bruce D."/>
            <person name="Han C."/>
            <person name="Tapia R."/>
            <person name="Saunders E."/>
            <person name="Gilna P."/>
            <person name="Schmutz J."/>
            <person name="Larimer F."/>
            <person name="Land M."/>
            <person name="Kyrpides N."/>
            <person name="Anderson I."/>
            <person name="Richardson P."/>
        </authorList>
    </citation>
    <scope>NUCLEOTIDE SEQUENCE [LARGE SCALE GENOMIC DNA]</scope>
    <source>
        <strain>ATCC 51484 / DSM 6875 / VKM B-1610 / KT</strain>
    </source>
</reference>
<organism>
    <name type="scientific">Methylobacillus flagellatus (strain ATCC 51484 / DSM 6875 / VKM B-1610 / KT)</name>
    <dbReference type="NCBI Taxonomy" id="265072"/>
    <lineage>
        <taxon>Bacteria</taxon>
        <taxon>Pseudomonadati</taxon>
        <taxon>Pseudomonadota</taxon>
        <taxon>Betaproteobacteria</taxon>
        <taxon>Nitrosomonadales</taxon>
        <taxon>Methylophilaceae</taxon>
        <taxon>Methylobacillus</taxon>
    </lineage>
</organism>
<sequence length="122" mass="13267">MIQMQSRLDVADNTGARSVMCIKVLGGSKRRYAGIGDIIKVSVKDAAPRGRVKKGEVYSAVVVRTAKGVRRPDGSLVKFDSNAAVLLNNKLEPIGTRIFGPVTRELRGERFMKIVSLAPEVL</sequence>
<feature type="chain" id="PRO_0000266504" description="Large ribosomal subunit protein uL14">
    <location>
        <begin position="1"/>
        <end position="122"/>
    </location>
</feature>